<sequence>MFERLEVMRKTYYALQEKLASGISDVKEITKLMKELKSLEDAVVAYEKYLSLKEQLKDLEELLELETESSVLEMAKAEEKSLESDIENLEESLRILLLPKDPDDDKNVIIEIKGAAGGDEGNIFAGDLFKMYSKYAESMGWKVTLVNTTPGSSGGFAGIEFIISGENAFSYLKHESGVHRVQRVPETESQGRIHTSTAVVLALPEQEDIEYDVKWEDIRFDTYNSSGAGGQSVNTTYSAVRLTHIPTNVVVTSQEERSQHANKDRAYKLLVTRIYDKIQQEQLEKEGESRKALIGRGNRSEKIRTYNYPQNRVTDHRIGLTINRLDAIMEGRIDLIIEPLINEIQKEALEGQSK</sequence>
<feature type="chain" id="PRO_1000117228" description="Peptide chain release factor 1">
    <location>
        <begin position="1"/>
        <end position="354"/>
    </location>
</feature>
<feature type="modified residue" description="N5-methylglutamine" evidence="1">
    <location>
        <position position="231"/>
    </location>
</feature>
<keyword id="KW-0963">Cytoplasm</keyword>
<keyword id="KW-0488">Methylation</keyword>
<keyword id="KW-0648">Protein biosynthesis</keyword>
<keyword id="KW-1185">Reference proteome</keyword>
<name>RF1_ACHLI</name>
<proteinExistence type="inferred from homology"/>
<reference key="1">
    <citation type="journal article" date="2011" name="J. Bacteriol.">
        <title>Complete genome and proteome of Acholeplasma laidlawii.</title>
        <authorList>
            <person name="Lazarev V.N."/>
            <person name="Levitskii S.A."/>
            <person name="Basovskii Y.I."/>
            <person name="Chukin M.M."/>
            <person name="Akopian T.A."/>
            <person name="Vereshchagin V.V."/>
            <person name="Kostrjukova E.S."/>
            <person name="Kovaleva G.Y."/>
            <person name="Kazanov M.D."/>
            <person name="Malko D.B."/>
            <person name="Vitreschak A.G."/>
            <person name="Sernova N.V."/>
            <person name="Gelfand M.S."/>
            <person name="Demina I.A."/>
            <person name="Serebryakova M.V."/>
            <person name="Galyamina M.A."/>
            <person name="Vtyurin N.N."/>
            <person name="Rogov S.I."/>
            <person name="Alexeev D.G."/>
            <person name="Ladygina V.G."/>
            <person name="Govorun V.M."/>
        </authorList>
    </citation>
    <scope>NUCLEOTIDE SEQUENCE [LARGE SCALE GENOMIC DNA]</scope>
    <source>
        <strain>PG-8A</strain>
    </source>
</reference>
<gene>
    <name evidence="1" type="primary">prfA</name>
    <name type="ordered locus">ACL_0201</name>
</gene>
<dbReference type="EMBL" id="CP000896">
    <property type="protein sequence ID" value="ABX80827.1"/>
    <property type="molecule type" value="Genomic_DNA"/>
</dbReference>
<dbReference type="RefSeq" id="WP_012242158.1">
    <property type="nucleotide sequence ID" value="NC_010163.1"/>
</dbReference>
<dbReference type="SMR" id="A9NEP7"/>
<dbReference type="STRING" id="441768.ACL_0201"/>
<dbReference type="GeneID" id="41338392"/>
<dbReference type="KEGG" id="acl:ACL_0201"/>
<dbReference type="eggNOG" id="COG0216">
    <property type="taxonomic scope" value="Bacteria"/>
</dbReference>
<dbReference type="HOGENOM" id="CLU_036856_0_1_14"/>
<dbReference type="OrthoDB" id="9806673at2"/>
<dbReference type="Proteomes" id="UP000008558">
    <property type="component" value="Chromosome"/>
</dbReference>
<dbReference type="GO" id="GO:0005737">
    <property type="term" value="C:cytoplasm"/>
    <property type="evidence" value="ECO:0007669"/>
    <property type="project" value="UniProtKB-SubCell"/>
</dbReference>
<dbReference type="GO" id="GO:0016149">
    <property type="term" value="F:translation release factor activity, codon specific"/>
    <property type="evidence" value="ECO:0007669"/>
    <property type="project" value="UniProtKB-UniRule"/>
</dbReference>
<dbReference type="FunFam" id="3.30.160.20:FF:000004">
    <property type="entry name" value="Peptide chain release factor 1"/>
    <property type="match status" value="1"/>
</dbReference>
<dbReference type="FunFam" id="3.30.70.1660:FF:000002">
    <property type="entry name" value="Peptide chain release factor 1"/>
    <property type="match status" value="1"/>
</dbReference>
<dbReference type="Gene3D" id="3.30.160.20">
    <property type="match status" value="1"/>
</dbReference>
<dbReference type="Gene3D" id="3.30.70.1660">
    <property type="match status" value="1"/>
</dbReference>
<dbReference type="Gene3D" id="6.10.140.1950">
    <property type="match status" value="1"/>
</dbReference>
<dbReference type="HAMAP" id="MF_00093">
    <property type="entry name" value="Rel_fac_1"/>
    <property type="match status" value="1"/>
</dbReference>
<dbReference type="InterPro" id="IPR005139">
    <property type="entry name" value="PCRF"/>
</dbReference>
<dbReference type="InterPro" id="IPR000352">
    <property type="entry name" value="Pep_chain_release_fac_I"/>
</dbReference>
<dbReference type="InterPro" id="IPR045853">
    <property type="entry name" value="Pep_chain_release_fac_I_sf"/>
</dbReference>
<dbReference type="InterPro" id="IPR050057">
    <property type="entry name" value="Prokaryotic/Mito_RF"/>
</dbReference>
<dbReference type="InterPro" id="IPR004373">
    <property type="entry name" value="RF-1"/>
</dbReference>
<dbReference type="NCBIfam" id="TIGR00019">
    <property type="entry name" value="prfA"/>
    <property type="match status" value="1"/>
</dbReference>
<dbReference type="NCBIfam" id="NF001859">
    <property type="entry name" value="PRK00591.1"/>
    <property type="match status" value="1"/>
</dbReference>
<dbReference type="PANTHER" id="PTHR43804">
    <property type="entry name" value="LD18447P"/>
    <property type="match status" value="1"/>
</dbReference>
<dbReference type="PANTHER" id="PTHR43804:SF7">
    <property type="entry name" value="LD18447P"/>
    <property type="match status" value="1"/>
</dbReference>
<dbReference type="Pfam" id="PF03462">
    <property type="entry name" value="PCRF"/>
    <property type="match status" value="1"/>
</dbReference>
<dbReference type="Pfam" id="PF00472">
    <property type="entry name" value="RF-1"/>
    <property type="match status" value="1"/>
</dbReference>
<dbReference type="SMART" id="SM00937">
    <property type="entry name" value="PCRF"/>
    <property type="match status" value="1"/>
</dbReference>
<dbReference type="SUPFAM" id="SSF75620">
    <property type="entry name" value="Release factor"/>
    <property type="match status" value="1"/>
</dbReference>
<protein>
    <recommendedName>
        <fullName evidence="1">Peptide chain release factor 1</fullName>
        <shortName evidence="1">RF-1</shortName>
    </recommendedName>
</protein>
<evidence type="ECO:0000255" key="1">
    <source>
        <dbReference type="HAMAP-Rule" id="MF_00093"/>
    </source>
</evidence>
<organism>
    <name type="scientific">Acholeplasma laidlawii (strain PG-8A)</name>
    <dbReference type="NCBI Taxonomy" id="441768"/>
    <lineage>
        <taxon>Bacteria</taxon>
        <taxon>Bacillati</taxon>
        <taxon>Mycoplasmatota</taxon>
        <taxon>Mollicutes</taxon>
        <taxon>Acholeplasmatales</taxon>
        <taxon>Acholeplasmataceae</taxon>
        <taxon>Acholeplasma</taxon>
    </lineage>
</organism>
<comment type="function">
    <text evidence="1">Peptide chain release factor 1 directs the termination of translation in response to the peptide chain termination codons UAG and UAA.</text>
</comment>
<comment type="subcellular location">
    <subcellularLocation>
        <location evidence="1">Cytoplasm</location>
    </subcellularLocation>
</comment>
<comment type="PTM">
    <text evidence="1">Methylated by PrmC. Methylation increases the termination efficiency of RF1.</text>
</comment>
<comment type="similarity">
    <text evidence="1">Belongs to the prokaryotic/mitochondrial release factor family.</text>
</comment>
<accession>A9NEP7</accession>